<reference key="1">
    <citation type="journal article" date="2004" name="Nat. Genet.">
        <title>Complete sequencing and characterization of 21,243 full-length human cDNAs.</title>
        <authorList>
            <person name="Ota T."/>
            <person name="Suzuki Y."/>
            <person name="Nishikawa T."/>
            <person name="Otsuki T."/>
            <person name="Sugiyama T."/>
            <person name="Irie R."/>
            <person name="Wakamatsu A."/>
            <person name="Hayashi K."/>
            <person name="Sato H."/>
            <person name="Nagai K."/>
            <person name="Kimura K."/>
            <person name="Makita H."/>
            <person name="Sekine M."/>
            <person name="Obayashi M."/>
            <person name="Nishi T."/>
            <person name="Shibahara T."/>
            <person name="Tanaka T."/>
            <person name="Ishii S."/>
            <person name="Yamamoto J."/>
            <person name="Saito K."/>
            <person name="Kawai Y."/>
            <person name="Isono Y."/>
            <person name="Nakamura Y."/>
            <person name="Nagahari K."/>
            <person name="Murakami K."/>
            <person name="Yasuda T."/>
            <person name="Iwayanagi T."/>
            <person name="Wagatsuma M."/>
            <person name="Shiratori A."/>
            <person name="Sudo H."/>
            <person name="Hosoiri T."/>
            <person name="Kaku Y."/>
            <person name="Kodaira H."/>
            <person name="Kondo H."/>
            <person name="Sugawara M."/>
            <person name="Takahashi M."/>
            <person name="Kanda K."/>
            <person name="Yokoi T."/>
            <person name="Furuya T."/>
            <person name="Kikkawa E."/>
            <person name="Omura Y."/>
            <person name="Abe K."/>
            <person name="Kamihara K."/>
            <person name="Katsuta N."/>
            <person name="Sato K."/>
            <person name="Tanikawa M."/>
            <person name="Yamazaki M."/>
            <person name="Ninomiya K."/>
            <person name="Ishibashi T."/>
            <person name="Yamashita H."/>
            <person name="Murakawa K."/>
            <person name="Fujimori K."/>
            <person name="Tanai H."/>
            <person name="Kimata M."/>
            <person name="Watanabe M."/>
            <person name="Hiraoka S."/>
            <person name="Chiba Y."/>
            <person name="Ishida S."/>
            <person name="Ono Y."/>
            <person name="Takiguchi S."/>
            <person name="Watanabe S."/>
            <person name="Yosida M."/>
            <person name="Hotuta T."/>
            <person name="Kusano J."/>
            <person name="Kanehori K."/>
            <person name="Takahashi-Fujii A."/>
            <person name="Hara H."/>
            <person name="Tanase T.-O."/>
            <person name="Nomura Y."/>
            <person name="Togiya S."/>
            <person name="Komai F."/>
            <person name="Hara R."/>
            <person name="Takeuchi K."/>
            <person name="Arita M."/>
            <person name="Imose N."/>
            <person name="Musashino K."/>
            <person name="Yuuki H."/>
            <person name="Oshima A."/>
            <person name="Sasaki N."/>
            <person name="Aotsuka S."/>
            <person name="Yoshikawa Y."/>
            <person name="Matsunawa H."/>
            <person name="Ichihara T."/>
            <person name="Shiohata N."/>
            <person name="Sano S."/>
            <person name="Moriya S."/>
            <person name="Momiyama H."/>
            <person name="Satoh N."/>
            <person name="Takami S."/>
            <person name="Terashima Y."/>
            <person name="Suzuki O."/>
            <person name="Nakagawa S."/>
            <person name="Senoh A."/>
            <person name="Mizoguchi H."/>
            <person name="Goto Y."/>
            <person name="Shimizu F."/>
            <person name="Wakebe H."/>
            <person name="Hishigaki H."/>
            <person name="Watanabe T."/>
            <person name="Sugiyama A."/>
            <person name="Takemoto M."/>
            <person name="Kawakami B."/>
            <person name="Yamazaki M."/>
            <person name="Watanabe K."/>
            <person name="Kumagai A."/>
            <person name="Itakura S."/>
            <person name="Fukuzumi Y."/>
            <person name="Fujimori Y."/>
            <person name="Komiyama M."/>
            <person name="Tashiro H."/>
            <person name="Tanigami A."/>
            <person name="Fujiwara T."/>
            <person name="Ono T."/>
            <person name="Yamada K."/>
            <person name="Fujii Y."/>
            <person name="Ozaki K."/>
            <person name="Hirao M."/>
            <person name="Ohmori Y."/>
            <person name="Kawabata A."/>
            <person name="Hikiji T."/>
            <person name="Kobatake N."/>
            <person name="Inagaki H."/>
            <person name="Ikema Y."/>
            <person name="Okamoto S."/>
            <person name="Okitani R."/>
            <person name="Kawakami T."/>
            <person name="Noguchi S."/>
            <person name="Itoh T."/>
            <person name="Shigeta K."/>
            <person name="Senba T."/>
            <person name="Matsumura K."/>
            <person name="Nakajima Y."/>
            <person name="Mizuno T."/>
            <person name="Morinaga M."/>
            <person name="Sasaki M."/>
            <person name="Togashi T."/>
            <person name="Oyama M."/>
            <person name="Hata H."/>
            <person name="Watanabe M."/>
            <person name="Komatsu T."/>
            <person name="Mizushima-Sugano J."/>
            <person name="Satoh T."/>
            <person name="Shirai Y."/>
            <person name="Takahashi Y."/>
            <person name="Nakagawa K."/>
            <person name="Okumura K."/>
            <person name="Nagase T."/>
            <person name="Nomura N."/>
            <person name="Kikuchi H."/>
            <person name="Masuho Y."/>
            <person name="Yamashita R."/>
            <person name="Nakai K."/>
            <person name="Yada T."/>
            <person name="Nakamura Y."/>
            <person name="Ohara O."/>
            <person name="Isogai T."/>
            <person name="Sugano S."/>
        </authorList>
    </citation>
    <scope>NUCLEOTIDE SEQUENCE [LARGE SCALE MRNA] (ISOFORMS 1 AND 2)</scope>
    <source>
        <tissue>Colon</tissue>
        <tissue>Small intestine</tissue>
    </source>
</reference>
<reference key="2">
    <citation type="journal article" date="2003" name="Nature">
        <title>The DNA sequence and analysis of human chromosome 6.</title>
        <authorList>
            <person name="Mungall A.J."/>
            <person name="Palmer S.A."/>
            <person name="Sims S.K."/>
            <person name="Edwards C.A."/>
            <person name="Ashurst J.L."/>
            <person name="Wilming L."/>
            <person name="Jones M.C."/>
            <person name="Horton R."/>
            <person name="Hunt S.E."/>
            <person name="Scott C.E."/>
            <person name="Gilbert J.G.R."/>
            <person name="Clamp M.E."/>
            <person name="Bethel G."/>
            <person name="Milne S."/>
            <person name="Ainscough R."/>
            <person name="Almeida J.P."/>
            <person name="Ambrose K.D."/>
            <person name="Andrews T.D."/>
            <person name="Ashwell R.I.S."/>
            <person name="Babbage A.K."/>
            <person name="Bagguley C.L."/>
            <person name="Bailey J."/>
            <person name="Banerjee R."/>
            <person name="Barker D.J."/>
            <person name="Barlow K.F."/>
            <person name="Bates K."/>
            <person name="Beare D.M."/>
            <person name="Beasley H."/>
            <person name="Beasley O."/>
            <person name="Bird C.P."/>
            <person name="Blakey S.E."/>
            <person name="Bray-Allen S."/>
            <person name="Brook J."/>
            <person name="Brown A.J."/>
            <person name="Brown J.Y."/>
            <person name="Burford D.C."/>
            <person name="Burrill W."/>
            <person name="Burton J."/>
            <person name="Carder C."/>
            <person name="Carter N.P."/>
            <person name="Chapman J.C."/>
            <person name="Clark S.Y."/>
            <person name="Clark G."/>
            <person name="Clee C.M."/>
            <person name="Clegg S."/>
            <person name="Cobley V."/>
            <person name="Collier R.E."/>
            <person name="Collins J.E."/>
            <person name="Colman L.K."/>
            <person name="Corby N.R."/>
            <person name="Coville G.J."/>
            <person name="Culley K.M."/>
            <person name="Dhami P."/>
            <person name="Davies J."/>
            <person name="Dunn M."/>
            <person name="Earthrowl M.E."/>
            <person name="Ellington A.E."/>
            <person name="Evans K.A."/>
            <person name="Faulkner L."/>
            <person name="Francis M.D."/>
            <person name="Frankish A."/>
            <person name="Frankland J."/>
            <person name="French L."/>
            <person name="Garner P."/>
            <person name="Garnett J."/>
            <person name="Ghori M.J."/>
            <person name="Gilby L.M."/>
            <person name="Gillson C.J."/>
            <person name="Glithero R.J."/>
            <person name="Grafham D.V."/>
            <person name="Grant M."/>
            <person name="Gribble S."/>
            <person name="Griffiths C."/>
            <person name="Griffiths M.N.D."/>
            <person name="Hall R."/>
            <person name="Halls K.S."/>
            <person name="Hammond S."/>
            <person name="Harley J.L."/>
            <person name="Hart E.A."/>
            <person name="Heath P.D."/>
            <person name="Heathcott R."/>
            <person name="Holmes S.J."/>
            <person name="Howden P.J."/>
            <person name="Howe K.L."/>
            <person name="Howell G.R."/>
            <person name="Huckle E."/>
            <person name="Humphray S.J."/>
            <person name="Humphries M.D."/>
            <person name="Hunt A.R."/>
            <person name="Johnson C.M."/>
            <person name="Joy A.A."/>
            <person name="Kay M."/>
            <person name="Keenan S.J."/>
            <person name="Kimberley A.M."/>
            <person name="King A."/>
            <person name="Laird G.K."/>
            <person name="Langford C."/>
            <person name="Lawlor S."/>
            <person name="Leongamornlert D.A."/>
            <person name="Leversha M."/>
            <person name="Lloyd C.R."/>
            <person name="Lloyd D.M."/>
            <person name="Loveland J.E."/>
            <person name="Lovell J."/>
            <person name="Martin S."/>
            <person name="Mashreghi-Mohammadi M."/>
            <person name="Maslen G.L."/>
            <person name="Matthews L."/>
            <person name="McCann O.T."/>
            <person name="McLaren S.J."/>
            <person name="McLay K."/>
            <person name="McMurray A."/>
            <person name="Moore M.J.F."/>
            <person name="Mullikin J.C."/>
            <person name="Niblett D."/>
            <person name="Nickerson T."/>
            <person name="Novik K.L."/>
            <person name="Oliver K."/>
            <person name="Overton-Larty E.K."/>
            <person name="Parker A."/>
            <person name="Patel R."/>
            <person name="Pearce A.V."/>
            <person name="Peck A.I."/>
            <person name="Phillimore B.J.C.T."/>
            <person name="Phillips S."/>
            <person name="Plumb R.W."/>
            <person name="Porter K.M."/>
            <person name="Ramsey Y."/>
            <person name="Ranby S.A."/>
            <person name="Rice C.M."/>
            <person name="Ross M.T."/>
            <person name="Searle S.M."/>
            <person name="Sehra H.K."/>
            <person name="Sheridan E."/>
            <person name="Skuce C.D."/>
            <person name="Smith S."/>
            <person name="Smith M."/>
            <person name="Spraggon L."/>
            <person name="Squares S.L."/>
            <person name="Steward C.A."/>
            <person name="Sycamore N."/>
            <person name="Tamlyn-Hall G."/>
            <person name="Tester J."/>
            <person name="Theaker A.J."/>
            <person name="Thomas D.W."/>
            <person name="Thorpe A."/>
            <person name="Tracey A."/>
            <person name="Tromans A."/>
            <person name="Tubby B."/>
            <person name="Wall M."/>
            <person name="Wallis J.M."/>
            <person name="West A.P."/>
            <person name="White S.S."/>
            <person name="Whitehead S.L."/>
            <person name="Whittaker H."/>
            <person name="Wild A."/>
            <person name="Willey D.J."/>
            <person name="Wilmer T.E."/>
            <person name="Wood J.M."/>
            <person name="Wray P.W."/>
            <person name="Wyatt J.C."/>
            <person name="Young L."/>
            <person name="Younger R.M."/>
            <person name="Bentley D.R."/>
            <person name="Coulson A."/>
            <person name="Durbin R.M."/>
            <person name="Hubbard T."/>
            <person name="Sulston J.E."/>
            <person name="Dunham I."/>
            <person name="Rogers J."/>
            <person name="Beck S."/>
        </authorList>
    </citation>
    <scope>NUCLEOTIDE SEQUENCE [LARGE SCALE GENOMIC DNA]</scope>
</reference>
<reference key="3">
    <citation type="submission" date="2005-07" db="EMBL/GenBank/DDBJ databases">
        <authorList>
            <person name="Mural R.J."/>
            <person name="Istrail S."/>
            <person name="Sutton G.G."/>
            <person name="Florea L."/>
            <person name="Halpern A.L."/>
            <person name="Mobarry C.M."/>
            <person name="Lippert R."/>
            <person name="Walenz B."/>
            <person name="Shatkay H."/>
            <person name="Dew I."/>
            <person name="Miller J.R."/>
            <person name="Flanigan M.J."/>
            <person name="Edwards N.J."/>
            <person name="Bolanos R."/>
            <person name="Fasulo D."/>
            <person name="Halldorsson B.V."/>
            <person name="Hannenhalli S."/>
            <person name="Turner R."/>
            <person name="Yooseph S."/>
            <person name="Lu F."/>
            <person name="Nusskern D.R."/>
            <person name="Shue B.C."/>
            <person name="Zheng X.H."/>
            <person name="Zhong F."/>
            <person name="Delcher A.L."/>
            <person name="Huson D.H."/>
            <person name="Kravitz S.A."/>
            <person name="Mouchard L."/>
            <person name="Reinert K."/>
            <person name="Remington K.A."/>
            <person name="Clark A.G."/>
            <person name="Waterman M.S."/>
            <person name="Eichler E.E."/>
            <person name="Adams M.D."/>
            <person name="Hunkapiller M.W."/>
            <person name="Myers E.W."/>
            <person name="Venter J.C."/>
        </authorList>
    </citation>
    <scope>NUCLEOTIDE SEQUENCE [LARGE SCALE GENOMIC DNA]</scope>
</reference>
<reference key="4">
    <citation type="journal article" date="2004" name="Genome Res.">
        <title>The status, quality, and expansion of the NIH full-length cDNA project: the Mammalian Gene Collection (MGC).</title>
        <authorList>
            <consortium name="The MGC Project Team"/>
        </authorList>
    </citation>
    <scope>NUCLEOTIDE SEQUENCE [LARGE SCALE MRNA] (ISOFORM 1)</scope>
    <source>
        <tissue>Bone marrow</tissue>
    </source>
</reference>
<reference key="5">
    <citation type="journal article" date="2011" name="Blood">
        <title>Novel protein ADTRP regulates TFPI expression and function in human endothelial cells in normal conditions and in response to androgen.</title>
        <authorList>
            <person name="Lupu C."/>
            <person name="Zhu H."/>
            <person name="Popescu N.I."/>
            <person name="Wren J.D."/>
            <person name="Lupu F."/>
        </authorList>
    </citation>
    <scope>FUNCTION</scope>
    <scope>TISSUE SPECIFICITY</scope>
    <scope>SUBCELLULAR LOCATION</scope>
    <scope>INDUCTION</scope>
</reference>
<reference key="6">
    <citation type="journal article" date="2016" name="Nat. Chem. Biol.">
        <title>AIG1 and ADTRP are atypical integral membrane hydrolases that degrade bioactive FAHFAs.</title>
        <authorList>
            <person name="Parsons W.H."/>
            <person name="Kolar M.J."/>
            <person name="Kamat S.S."/>
            <person name="Cognetta A.B. III"/>
            <person name="Hulce J.J."/>
            <person name="Saez E."/>
            <person name="Kahn B.B."/>
            <person name="Saghatelian A."/>
            <person name="Cravatt B.F."/>
        </authorList>
    </citation>
    <scope>FUNCTION</scope>
    <scope>CATALYTIC ACTIVITY</scope>
    <scope>ACTIVITY REGULATION</scope>
    <scope>SUBCELLULAR LOCATION</scope>
    <scope>TOPOLOGY MODEL</scope>
    <scope>SITE</scope>
    <scope>MUTAGENESIS OF THR-47 AND HIS-131</scope>
</reference>
<proteinExistence type="evidence at protein level"/>
<organism>
    <name type="scientific">Homo sapiens</name>
    <name type="common">Human</name>
    <dbReference type="NCBI Taxonomy" id="9606"/>
    <lineage>
        <taxon>Eukaryota</taxon>
        <taxon>Metazoa</taxon>
        <taxon>Chordata</taxon>
        <taxon>Craniata</taxon>
        <taxon>Vertebrata</taxon>
        <taxon>Euteleostomi</taxon>
        <taxon>Mammalia</taxon>
        <taxon>Eutheria</taxon>
        <taxon>Euarchontoglires</taxon>
        <taxon>Primates</taxon>
        <taxon>Haplorrhini</taxon>
        <taxon>Catarrhini</taxon>
        <taxon>Hominidae</taxon>
        <taxon>Homo</taxon>
    </lineage>
</organism>
<name>ADTRP_HUMAN</name>
<feature type="chain" id="PRO_0000190100" description="Androgen-dependent TFPI-regulating protein">
    <location>
        <begin position="1"/>
        <end position="230"/>
    </location>
</feature>
<feature type="topological domain" description="Cytoplasmic" evidence="7">
    <location>
        <begin position="1"/>
        <end position="3"/>
    </location>
</feature>
<feature type="transmembrane region" description="Helical" evidence="1">
    <location>
        <begin position="4"/>
        <end position="24"/>
    </location>
</feature>
<feature type="topological domain" description="Extracellular" evidence="7">
    <location>
        <begin position="25"/>
        <end position="46"/>
    </location>
</feature>
<feature type="transmembrane region" description="Helical" evidence="1">
    <location>
        <begin position="47"/>
        <end position="67"/>
    </location>
</feature>
<feature type="topological domain" description="Cytoplasmic" evidence="7">
    <location>
        <begin position="68"/>
        <end position="85"/>
    </location>
</feature>
<feature type="transmembrane region" description="Helical" evidence="1">
    <location>
        <begin position="86"/>
        <end position="106"/>
    </location>
</feature>
<feature type="topological domain" description="Extracellular" evidence="7">
    <location>
        <begin position="107"/>
        <end position="119"/>
    </location>
</feature>
<feature type="transmembrane region" description="Helical" evidence="1">
    <location>
        <begin position="120"/>
        <end position="140"/>
    </location>
</feature>
<feature type="topological domain" description="Cytoplasmic" evidence="7">
    <location>
        <begin position="141"/>
        <end position="154"/>
    </location>
</feature>
<feature type="transmembrane region" description="Helical" evidence="1">
    <location>
        <begin position="155"/>
        <end position="175"/>
    </location>
</feature>
<feature type="topological domain" description="Extracellular" evidence="7">
    <location>
        <begin position="176"/>
        <end position="189"/>
    </location>
</feature>
<feature type="transmembrane region" description="Helical" evidence="1">
    <location>
        <begin position="190"/>
        <end position="210"/>
    </location>
</feature>
<feature type="topological domain" description="Cytoplasmic" evidence="7">
    <location>
        <begin position="211"/>
        <end position="230"/>
    </location>
</feature>
<feature type="site" description="Important for catalytic activity" evidence="3">
    <location>
        <position position="47"/>
    </location>
</feature>
<feature type="site" description="Important for catalytic activity" evidence="3">
    <location>
        <position position="131"/>
    </location>
</feature>
<feature type="splice variant" id="VSP_041965" description="In isoform 2." evidence="4">
    <original>L</original>
    <variation>LKNRTAGFDIYQPGSFRQL</variation>
    <location>
        <position position="52"/>
    </location>
</feature>
<feature type="splice variant" id="VSP_042868" description="In isoform 3." evidence="6">
    <original>GDMRQPRKKRK</original>
    <variation>VSVQILQRWRLESVGICFQWPDWKSPAKHQLVKNIR</variation>
    <location>
        <begin position="220"/>
        <end position="230"/>
    </location>
</feature>
<feature type="sequence variant" id="VAR_024365" description="In dbSNP:rs2076185.">
    <original>V</original>
    <variation>I</variation>
    <location>
        <position position="202"/>
    </location>
</feature>
<feature type="mutagenesis site" description="Loss of hydrolase activity." evidence="3">
    <original>T</original>
    <variation>A</variation>
    <location>
        <position position="47"/>
    </location>
</feature>
<feature type="mutagenesis site" description="Loss of hydrolase activity." evidence="3">
    <original>H</original>
    <variation>A</variation>
    <location>
        <position position="131"/>
    </location>
</feature>
<gene>
    <name type="primary">ADTRP</name>
    <name type="synonym">C6orf105</name>
</gene>
<keyword id="KW-0025">Alternative splicing</keyword>
<keyword id="KW-1003">Cell membrane</keyword>
<keyword id="KW-0378">Hydrolase</keyword>
<keyword id="KW-0443">Lipid metabolism</keyword>
<keyword id="KW-0472">Membrane</keyword>
<keyword id="KW-1267">Proteomics identification</keyword>
<keyword id="KW-1185">Reference proteome</keyword>
<keyword id="KW-0812">Transmembrane</keyword>
<keyword id="KW-1133">Transmembrane helix</keyword>
<sequence length="230" mass="26842">MTKTSTCIYHFLVLSWYTFLNYYISQEGKDEVKPKILANGARWKYMTLLNLLLQTIFYGVTCLDDVLKRTKGGKDIKFLTAFRDLLFTTLAFPVSTFVFLAFWILFLYNRDLIYPKVLDTVIPVWLNHAMHTFIFPITLAEVVLRPHSYPSKKTGLTLLAAASIAYISRILWLYFETGTWVYPVFAKLSLLGLAAFFSLSYVFIASIYLLGEKLNHWKWGDMRQPRKKRK</sequence>
<accession>Q96IZ2</accession>
<accession>B2R7T9</accession>
<accession>B4DV39</accession>
<accession>Q5THW1</accession>
<evidence type="ECO:0000255" key="1"/>
<evidence type="ECO:0000269" key="2">
    <source>
    </source>
</evidence>
<evidence type="ECO:0000269" key="3">
    <source>
    </source>
</evidence>
<evidence type="ECO:0000303" key="4">
    <source>
    </source>
</evidence>
<evidence type="ECO:0000303" key="5">
    <source>
    </source>
</evidence>
<evidence type="ECO:0000305" key="6"/>
<evidence type="ECO:0000305" key="7">
    <source>
    </source>
</evidence>
<dbReference type="EC" id="3.1.-.-" evidence="3"/>
<dbReference type="EMBL" id="AK313114">
    <property type="protein sequence ID" value="BAG35936.1"/>
    <property type="molecule type" value="mRNA"/>
</dbReference>
<dbReference type="EMBL" id="AK300919">
    <property type="protein sequence ID" value="BAG62551.1"/>
    <property type="molecule type" value="mRNA"/>
</dbReference>
<dbReference type="EMBL" id="AL022724">
    <property type="status" value="NOT_ANNOTATED_CDS"/>
    <property type="molecule type" value="Genomic_DNA"/>
</dbReference>
<dbReference type="EMBL" id="CH471087">
    <property type="protein sequence ID" value="EAW55304.1"/>
    <property type="molecule type" value="Genomic_DNA"/>
</dbReference>
<dbReference type="EMBL" id="CH471087">
    <property type="protein sequence ID" value="EAW55306.1"/>
    <property type="molecule type" value="Genomic_DNA"/>
</dbReference>
<dbReference type="EMBL" id="BC007011">
    <property type="protein sequence ID" value="AAH07011.1"/>
    <property type="molecule type" value="mRNA"/>
</dbReference>
<dbReference type="CCDS" id="CCDS4521.1">
    <molecule id="Q96IZ2-1"/>
</dbReference>
<dbReference type="CCDS" id="CCDS47374.1">
    <molecule id="Q96IZ2-2"/>
</dbReference>
<dbReference type="RefSeq" id="NP_001137420.1">
    <molecule id="Q96IZ2-2"/>
    <property type="nucleotide sequence ID" value="NM_001143948.2"/>
</dbReference>
<dbReference type="RefSeq" id="NP_116133.1">
    <molecule id="Q96IZ2-1"/>
    <property type="nucleotide sequence ID" value="NM_032744.4"/>
</dbReference>
<dbReference type="RefSeq" id="XP_005249511.1">
    <property type="nucleotide sequence ID" value="XM_005249454.3"/>
</dbReference>
<dbReference type="RefSeq" id="XP_011513258.1">
    <molecule id="Q96IZ2-3"/>
    <property type="nucleotide sequence ID" value="XM_011514956.2"/>
</dbReference>
<dbReference type="RefSeq" id="XP_054212560.1">
    <molecule id="Q96IZ2-3"/>
    <property type="nucleotide sequence ID" value="XM_054356585.1"/>
</dbReference>
<dbReference type="RefSeq" id="XP_054212561.1">
    <molecule id="Q96IZ2-3"/>
    <property type="nucleotide sequence ID" value="XM_054356586.1"/>
</dbReference>
<dbReference type="RefSeq" id="XP_054212562.1">
    <molecule id="Q96IZ2-3"/>
    <property type="nucleotide sequence ID" value="XM_054356587.1"/>
</dbReference>
<dbReference type="RefSeq" id="XP_054212563.1">
    <molecule id="Q96IZ2-1"/>
    <property type="nucleotide sequence ID" value="XM_054356588.1"/>
</dbReference>
<dbReference type="RefSeq" id="XP_054212564.1">
    <molecule id="Q96IZ2-1"/>
    <property type="nucleotide sequence ID" value="XM_054356589.1"/>
</dbReference>
<dbReference type="RefSeq" id="XP_054212565.1">
    <molecule id="Q96IZ2-1"/>
    <property type="nucleotide sequence ID" value="XM_054356590.1"/>
</dbReference>
<dbReference type="RefSeq" id="XP_054212566.1">
    <molecule id="Q96IZ2-1"/>
    <property type="nucleotide sequence ID" value="XM_054356591.1"/>
</dbReference>
<dbReference type="BioGRID" id="124285">
    <property type="interactions" value="5"/>
</dbReference>
<dbReference type="FunCoup" id="Q96IZ2">
    <property type="interactions" value="22"/>
</dbReference>
<dbReference type="IntAct" id="Q96IZ2">
    <property type="interactions" value="5"/>
</dbReference>
<dbReference type="MINT" id="Q96IZ2"/>
<dbReference type="STRING" id="9606.ENSP00000229583"/>
<dbReference type="BindingDB" id="Q96IZ2"/>
<dbReference type="SwissLipids" id="SLP:000001683"/>
<dbReference type="iPTMnet" id="Q96IZ2"/>
<dbReference type="PhosphoSitePlus" id="Q96IZ2"/>
<dbReference type="BioMuta" id="ADTRP"/>
<dbReference type="DMDM" id="83286865"/>
<dbReference type="PaxDb" id="9606-ENSP00000229583"/>
<dbReference type="PeptideAtlas" id="Q96IZ2"/>
<dbReference type="ProteomicsDB" id="76871">
    <molecule id="Q96IZ2-1"/>
</dbReference>
<dbReference type="ProteomicsDB" id="76872">
    <molecule id="Q96IZ2-2"/>
</dbReference>
<dbReference type="ProteomicsDB" id="76873">
    <molecule id="Q96IZ2-3"/>
</dbReference>
<dbReference type="Antibodypedia" id="63585">
    <property type="antibodies" value="4 antibodies from 4 providers"/>
</dbReference>
<dbReference type="DNASU" id="84830"/>
<dbReference type="Ensembl" id="ENST00000229583.9">
    <molecule id="Q96IZ2-2"/>
    <property type="protein sequence ID" value="ENSP00000229583.5"/>
    <property type="gene ID" value="ENSG00000111863.13"/>
</dbReference>
<dbReference type="Ensembl" id="ENST00000414691.8">
    <molecule id="Q96IZ2-1"/>
    <property type="protein sequence ID" value="ENSP00000404416.2"/>
    <property type="gene ID" value="ENSG00000111863.13"/>
</dbReference>
<dbReference type="GeneID" id="84830"/>
<dbReference type="KEGG" id="hsa:84830"/>
<dbReference type="MANE-Select" id="ENST00000414691.8">
    <property type="protein sequence ID" value="ENSP00000404416.2"/>
    <property type="RefSeq nucleotide sequence ID" value="NM_032744.4"/>
    <property type="RefSeq protein sequence ID" value="NP_116133.1"/>
</dbReference>
<dbReference type="UCSC" id="uc003nab.4">
    <molecule id="Q96IZ2-1"/>
    <property type="organism name" value="human"/>
</dbReference>
<dbReference type="AGR" id="HGNC:21214"/>
<dbReference type="CTD" id="84830"/>
<dbReference type="DisGeNET" id="84830"/>
<dbReference type="GeneCards" id="ADTRP"/>
<dbReference type="HGNC" id="HGNC:21214">
    <property type="gene designation" value="ADTRP"/>
</dbReference>
<dbReference type="HPA" id="ENSG00000111863">
    <property type="expression patterns" value="Tissue enhanced (choroid plexus, intestine, parathyroid gland)"/>
</dbReference>
<dbReference type="MIM" id="614348">
    <property type="type" value="gene"/>
</dbReference>
<dbReference type="neXtProt" id="NX_Q96IZ2"/>
<dbReference type="OpenTargets" id="ENSG00000111863"/>
<dbReference type="PharmGKB" id="PA134981312"/>
<dbReference type="VEuPathDB" id="HostDB:ENSG00000111863"/>
<dbReference type="eggNOG" id="KOG3989">
    <property type="taxonomic scope" value="Eukaryota"/>
</dbReference>
<dbReference type="GeneTree" id="ENSGT00940000158284"/>
<dbReference type="HOGENOM" id="CLU_073346_2_0_1"/>
<dbReference type="InParanoid" id="Q96IZ2"/>
<dbReference type="OMA" id="AFFPPWI"/>
<dbReference type="OrthoDB" id="1898221at2759"/>
<dbReference type="PAN-GO" id="Q96IZ2">
    <property type="GO annotations" value="1 GO annotation based on evolutionary models"/>
</dbReference>
<dbReference type="PhylomeDB" id="Q96IZ2"/>
<dbReference type="TreeFam" id="TF318170"/>
<dbReference type="PathwayCommons" id="Q96IZ2"/>
<dbReference type="SignaLink" id="Q96IZ2"/>
<dbReference type="BioGRID-ORCS" id="84830">
    <property type="hits" value="9 hits in 1156 CRISPR screens"/>
</dbReference>
<dbReference type="ChiTaRS" id="ADTRP">
    <property type="organism name" value="human"/>
</dbReference>
<dbReference type="GenomeRNAi" id="84830"/>
<dbReference type="Pharos" id="Q96IZ2">
    <property type="development level" value="Tbio"/>
</dbReference>
<dbReference type="PRO" id="PR:Q96IZ2"/>
<dbReference type="Proteomes" id="UP000005640">
    <property type="component" value="Chromosome 6"/>
</dbReference>
<dbReference type="RNAct" id="Q96IZ2">
    <property type="molecule type" value="protein"/>
</dbReference>
<dbReference type="Bgee" id="ENSG00000111863">
    <property type="expression patterns" value="Expressed in sperm and 155 other cell types or tissues"/>
</dbReference>
<dbReference type="ExpressionAtlas" id="Q96IZ2">
    <property type="expression patterns" value="baseline and differential"/>
</dbReference>
<dbReference type="GO" id="GO:0005901">
    <property type="term" value="C:caveola"/>
    <property type="evidence" value="ECO:0000314"/>
    <property type="project" value="UniProtKB"/>
</dbReference>
<dbReference type="GO" id="GO:0009986">
    <property type="term" value="C:cell surface"/>
    <property type="evidence" value="ECO:0000314"/>
    <property type="project" value="UniProtKB"/>
</dbReference>
<dbReference type="GO" id="GO:0012505">
    <property type="term" value="C:endomembrane system"/>
    <property type="evidence" value="ECO:0000318"/>
    <property type="project" value="GO_Central"/>
</dbReference>
<dbReference type="GO" id="GO:0016020">
    <property type="term" value="C:membrane"/>
    <property type="evidence" value="ECO:0000314"/>
    <property type="project" value="UniProtKB"/>
</dbReference>
<dbReference type="GO" id="GO:0016787">
    <property type="term" value="F:hydrolase activity"/>
    <property type="evidence" value="ECO:0000315"/>
    <property type="project" value="UniProtKB"/>
</dbReference>
<dbReference type="GO" id="GO:0002042">
    <property type="term" value="P:cell migration involved in sprouting angiogenesis"/>
    <property type="evidence" value="ECO:0000315"/>
    <property type="project" value="BHF-UCL"/>
</dbReference>
<dbReference type="GO" id="GO:0140052">
    <property type="term" value="P:cellular response to oxidised low-density lipoprotein particle stimulus"/>
    <property type="evidence" value="ECO:0000315"/>
    <property type="project" value="BHF-UCL"/>
</dbReference>
<dbReference type="GO" id="GO:0071383">
    <property type="term" value="P:cellular response to steroid hormone stimulus"/>
    <property type="evidence" value="ECO:0000270"/>
    <property type="project" value="UniProtKB"/>
</dbReference>
<dbReference type="GO" id="GO:0042758">
    <property type="term" value="P:long-chain fatty acid catabolic process"/>
    <property type="evidence" value="ECO:0000315"/>
    <property type="project" value="UniProtKB"/>
</dbReference>
<dbReference type="GO" id="GO:0030195">
    <property type="term" value="P:negative regulation of blood coagulation"/>
    <property type="evidence" value="ECO:0000315"/>
    <property type="project" value="UniProtKB"/>
</dbReference>
<dbReference type="GO" id="GO:0003332">
    <property type="term" value="P:negative regulation of extracellular matrix constituent secretion"/>
    <property type="evidence" value="ECO:0000315"/>
    <property type="project" value="BHF-UCL"/>
</dbReference>
<dbReference type="GO" id="GO:1903038">
    <property type="term" value="P:negative regulation of leukocyte cell-cell adhesion"/>
    <property type="evidence" value="ECO:0000315"/>
    <property type="project" value="BHF-UCL"/>
</dbReference>
<dbReference type="GO" id="GO:0002686">
    <property type="term" value="P:negative regulation of leukocyte migration"/>
    <property type="evidence" value="ECO:0000315"/>
    <property type="project" value="BHF-UCL"/>
</dbReference>
<dbReference type="GO" id="GO:2000402">
    <property type="term" value="P:negative regulation of lymphocyte migration"/>
    <property type="evidence" value="ECO:0000315"/>
    <property type="project" value="BHF-UCL"/>
</dbReference>
<dbReference type="GO" id="GO:0050709">
    <property type="term" value="P:negative regulation of protein secretion"/>
    <property type="evidence" value="ECO:0000315"/>
    <property type="project" value="BHF-UCL"/>
</dbReference>
<dbReference type="GO" id="GO:0010628">
    <property type="term" value="P:positive regulation of gene expression"/>
    <property type="evidence" value="ECO:0000315"/>
    <property type="project" value="UniProtKB"/>
</dbReference>
<dbReference type="GO" id="GO:0051897">
    <property type="term" value="P:positive regulation of phosphatidylinositol 3-kinase/protein kinase B signal transduction"/>
    <property type="evidence" value="ECO:0000315"/>
    <property type="project" value="BHF-UCL"/>
</dbReference>
<dbReference type="InterPro" id="IPR006838">
    <property type="entry name" value="ADTRP_AIG1"/>
</dbReference>
<dbReference type="PANTHER" id="PTHR10989:SF17">
    <property type="entry name" value="ANDROGEN-DEPENDENT TFPI-REGULATING PROTEIN"/>
    <property type="match status" value="1"/>
</dbReference>
<dbReference type="PANTHER" id="PTHR10989">
    <property type="entry name" value="ANDROGEN-INDUCED PROTEIN 1-RELATED"/>
    <property type="match status" value="1"/>
</dbReference>
<dbReference type="Pfam" id="PF04750">
    <property type="entry name" value="Far-17a_AIG1"/>
    <property type="match status" value="1"/>
</dbReference>
<protein>
    <recommendedName>
        <fullName>Androgen-dependent TFPI-regulating protein</fullName>
    </recommendedName>
    <alternativeName>
        <fullName evidence="5">Fatty acid esters of hydroxy fatty acids hydrolase ADTRP</fullName>
        <shortName evidence="5">FAHFA hydrolase ADTRP</shortName>
        <ecNumber evidence="3">3.1.-.-</ecNumber>
    </alternativeName>
</protein>
<comment type="function">
    <text evidence="2 3">Hydrolyzes bioactive fatty-acid esters of hydroxy-fatty acids (FAHFAs), but not other major classes of lipids (PubMed:27018888). Show a preference for FAHFAs with branching distal from the carboxylate head group of the lipids (PubMed:27018888). Regulates the expression and the cell-associated anticoagulant activity of the inhibitor TFPI in endothelial cells (in vitro) (PubMed:21868574).</text>
</comment>
<comment type="catalytic activity">
    <reaction evidence="3">
        <text>9-hexadecanoyloxy-octadecanoate + H2O = 9-hydroxy-octadecanoate + hexadecanoate + H(+)</text>
        <dbReference type="Rhea" id="RHEA:52052"/>
        <dbReference type="ChEBI" id="CHEBI:7896"/>
        <dbReference type="ChEBI" id="CHEBI:15377"/>
        <dbReference type="ChEBI" id="CHEBI:15378"/>
        <dbReference type="ChEBI" id="CHEBI:83670"/>
        <dbReference type="ChEBI" id="CHEBI:136286"/>
    </reaction>
    <physiologicalReaction direction="left-to-right" evidence="7">
        <dbReference type="Rhea" id="RHEA:52053"/>
    </physiologicalReaction>
</comment>
<comment type="catalytic activity">
    <reaction evidence="3">
        <text>12-hexadecanoyloxy-octadecanoate + H2O = 12-hydroxyoctadecanoate + hexadecanoate + H(+)</text>
        <dbReference type="Rhea" id="RHEA:52056"/>
        <dbReference type="ChEBI" id="CHEBI:7896"/>
        <dbReference type="ChEBI" id="CHEBI:15377"/>
        <dbReference type="ChEBI" id="CHEBI:15378"/>
        <dbReference type="ChEBI" id="CHEBI:83677"/>
        <dbReference type="ChEBI" id="CHEBI:84201"/>
    </reaction>
    <physiologicalReaction direction="left-to-right" evidence="7">
        <dbReference type="Rhea" id="RHEA:52057"/>
    </physiologicalReaction>
</comment>
<comment type="catalytic activity">
    <reaction evidence="3">
        <text>9-(9Z-hexadecenoyloxy)-octadecanoate + H2O = (9Z)-hexadecenoate + 9-hydroxy-octadecanoate + H(+)</text>
        <dbReference type="Rhea" id="RHEA:52068"/>
        <dbReference type="ChEBI" id="CHEBI:15377"/>
        <dbReference type="ChEBI" id="CHEBI:15378"/>
        <dbReference type="ChEBI" id="CHEBI:32372"/>
        <dbReference type="ChEBI" id="CHEBI:136286"/>
        <dbReference type="ChEBI" id="CHEBI:136309"/>
    </reaction>
    <physiologicalReaction direction="left-to-right" evidence="7">
        <dbReference type="Rhea" id="RHEA:52069"/>
    </physiologicalReaction>
</comment>
<comment type="catalytic activity">
    <reaction evidence="3">
        <text>12-(9Z-hexadecenoyloxy)-octadecanoate + H2O = 12-hydroxyoctadecanoate + (9Z)-hexadecenoate + H(+)</text>
        <dbReference type="Rhea" id="RHEA:52072"/>
        <dbReference type="ChEBI" id="CHEBI:15377"/>
        <dbReference type="ChEBI" id="CHEBI:15378"/>
        <dbReference type="ChEBI" id="CHEBI:32372"/>
        <dbReference type="ChEBI" id="CHEBI:84201"/>
        <dbReference type="ChEBI" id="CHEBI:136312"/>
    </reaction>
    <physiologicalReaction direction="left-to-right" evidence="7">
        <dbReference type="Rhea" id="RHEA:52073"/>
    </physiologicalReaction>
</comment>
<comment type="catalytic activity">
    <reaction evidence="3">
        <text>13-(9Z-hexadecenoyloxy)-octadecanoate + H2O = 13-hydroxy-octadecanoate + (9Z)-hexadecenoate + H(+)</text>
        <dbReference type="Rhea" id="RHEA:52076"/>
        <dbReference type="ChEBI" id="CHEBI:15377"/>
        <dbReference type="ChEBI" id="CHEBI:15378"/>
        <dbReference type="ChEBI" id="CHEBI:32372"/>
        <dbReference type="ChEBI" id="CHEBI:136304"/>
        <dbReference type="ChEBI" id="CHEBI:136315"/>
    </reaction>
    <physiologicalReaction direction="left-to-right" evidence="7">
        <dbReference type="Rhea" id="RHEA:52077"/>
    </physiologicalReaction>
</comment>
<comment type="catalytic activity">
    <reaction evidence="3">
        <text>9-octadecanoyloxy-octadecanoate + H2O = 9-hydroxy-octadecanoate + octadecanoate + H(+)</text>
        <dbReference type="Rhea" id="RHEA:52096"/>
        <dbReference type="ChEBI" id="CHEBI:15377"/>
        <dbReference type="ChEBI" id="CHEBI:15378"/>
        <dbReference type="ChEBI" id="CHEBI:25629"/>
        <dbReference type="ChEBI" id="CHEBI:136286"/>
        <dbReference type="ChEBI" id="CHEBI:136373"/>
    </reaction>
    <physiologicalReaction direction="left-to-right" evidence="7">
        <dbReference type="Rhea" id="RHEA:52097"/>
    </physiologicalReaction>
</comment>
<comment type="catalytic activity">
    <reaction evidence="3">
        <text>12-octadecanoyloxy-octadecanoate + H2O = 12-hydroxyoctadecanoate + octadecanoate + H(+)</text>
        <dbReference type="Rhea" id="RHEA:52080"/>
        <dbReference type="ChEBI" id="CHEBI:15377"/>
        <dbReference type="ChEBI" id="CHEBI:15378"/>
        <dbReference type="ChEBI" id="CHEBI:25629"/>
        <dbReference type="ChEBI" id="CHEBI:84201"/>
        <dbReference type="ChEBI" id="CHEBI:136330"/>
    </reaction>
    <physiologicalReaction direction="left-to-right" evidence="7">
        <dbReference type="Rhea" id="RHEA:52081"/>
    </physiologicalReaction>
</comment>
<comment type="catalytic activity">
    <reaction evidence="3">
        <text>13-octadecanoyloxy-octadecanoate + H2O = 13-hydroxy-octadecanoate + octadecanoate + H(+)</text>
        <dbReference type="Rhea" id="RHEA:52084"/>
        <dbReference type="ChEBI" id="CHEBI:15377"/>
        <dbReference type="ChEBI" id="CHEBI:15378"/>
        <dbReference type="ChEBI" id="CHEBI:25629"/>
        <dbReference type="ChEBI" id="CHEBI:136304"/>
        <dbReference type="ChEBI" id="CHEBI:136335"/>
    </reaction>
    <physiologicalReaction direction="left-to-right" evidence="7">
        <dbReference type="Rhea" id="RHEA:52085"/>
    </physiologicalReaction>
</comment>
<comment type="catalytic activity">
    <reaction evidence="3">
        <text>9-(9Z-octadecenoyloxy)-octadecanoate + H2O = 9-hydroxy-octadecanoate + (9Z)-octadecenoate + H(+)</text>
        <dbReference type="Rhea" id="RHEA:52048"/>
        <dbReference type="ChEBI" id="CHEBI:15377"/>
        <dbReference type="ChEBI" id="CHEBI:15378"/>
        <dbReference type="ChEBI" id="CHEBI:30823"/>
        <dbReference type="ChEBI" id="CHEBI:136282"/>
        <dbReference type="ChEBI" id="CHEBI:136286"/>
    </reaction>
    <physiologicalReaction direction="left-to-right" evidence="7">
        <dbReference type="Rhea" id="RHEA:52049"/>
    </physiologicalReaction>
</comment>
<comment type="catalytic activity">
    <reaction evidence="3">
        <text>12-(9Z-octadecenoyloxy)-octadecanoate + H2O = 12-hydroxyoctadecanoate + (9Z)-octadecenoate + H(+)</text>
        <dbReference type="Rhea" id="RHEA:52060"/>
        <dbReference type="ChEBI" id="CHEBI:15377"/>
        <dbReference type="ChEBI" id="CHEBI:15378"/>
        <dbReference type="ChEBI" id="CHEBI:30823"/>
        <dbReference type="ChEBI" id="CHEBI:84201"/>
        <dbReference type="ChEBI" id="CHEBI:136302"/>
    </reaction>
    <physiologicalReaction direction="left-to-right" evidence="7">
        <dbReference type="Rhea" id="RHEA:52061"/>
    </physiologicalReaction>
</comment>
<comment type="catalytic activity">
    <reaction evidence="3">
        <text>13-(9Z-octadecenoyloxy)-octadecanoate + H2O = 13-hydroxy-octadecanoate + (9Z)-octadecenoate + H(+)</text>
        <dbReference type="Rhea" id="RHEA:52064"/>
        <dbReference type="ChEBI" id="CHEBI:15377"/>
        <dbReference type="ChEBI" id="CHEBI:15378"/>
        <dbReference type="ChEBI" id="CHEBI:30823"/>
        <dbReference type="ChEBI" id="CHEBI:136303"/>
        <dbReference type="ChEBI" id="CHEBI:136304"/>
    </reaction>
    <physiologicalReaction direction="left-to-right" evidence="7">
        <dbReference type="Rhea" id="RHEA:52065"/>
    </physiologicalReaction>
</comment>
<comment type="catalytic activity">
    <reaction evidence="3">
        <text>5-(9Z-octadecenoyloxy)-octadecanoate + H2O = 5-hydroxy-octadecanoate + (9Z)-octadecenoate + H(+)</text>
        <dbReference type="Rhea" id="RHEA:52100"/>
        <dbReference type="ChEBI" id="CHEBI:15377"/>
        <dbReference type="ChEBI" id="CHEBI:15378"/>
        <dbReference type="ChEBI" id="CHEBI:30823"/>
        <dbReference type="ChEBI" id="CHEBI:136370"/>
        <dbReference type="ChEBI" id="CHEBI:136389"/>
    </reaction>
    <physiologicalReaction direction="left-to-right" evidence="7">
        <dbReference type="Rhea" id="RHEA:52101"/>
    </physiologicalReaction>
</comment>
<comment type="activity regulation">
    <text evidence="3">Inhibited by N-hydroxyhydantoin carbamate JJH260 and beta-lactone KC01.</text>
</comment>
<comment type="interaction">
    <interactant intactId="EBI-3921528">
        <id>Q96IZ2</id>
    </interactant>
    <interactant intactId="EBI-2807956">
        <id>Q96FZ5</id>
        <label>CMTM7</label>
    </interactant>
    <organismsDiffer>false</organismsDiffer>
    <experiments>3</experiments>
</comment>
<comment type="interaction">
    <interactant intactId="EBI-3921528">
        <id>Q96IZ2</id>
    </interactant>
    <interactant intactId="EBI-11603430">
        <id>Q6PL24</id>
        <label>TMED8</label>
    </interactant>
    <organismsDiffer>false</organismsDiffer>
    <experiments>3</experiments>
</comment>
<comment type="subcellular location">
    <subcellularLocation>
        <location evidence="2 3">Cell membrane</location>
        <topology evidence="1">Multi-pass membrane protein</topology>
    </subcellularLocation>
    <text evidence="2">Colocalized with TFPI and CAV1 in lipid rafts.</text>
</comment>
<comment type="alternative products">
    <event type="alternative splicing"/>
    <isoform>
        <id>Q96IZ2-1</id>
        <name>1</name>
        <sequence type="displayed"/>
    </isoform>
    <isoform>
        <id>Q96IZ2-2</id>
        <name>2</name>
        <sequence type="described" ref="VSP_041965"/>
    </isoform>
    <isoform>
        <id>Q96IZ2-3</id>
        <name>3</name>
        <sequence type="described" ref="VSP_042868"/>
    </isoform>
</comment>
<comment type="tissue specificity">
    <text evidence="2">Expressed in cultured endothelial cells and in placenta.</text>
</comment>
<comment type="induction">
    <text evidence="2">By androgens.</text>
</comment>
<comment type="similarity">
    <text evidence="6">Belongs to the AIG1 family.</text>
</comment>